<evidence type="ECO:0000255" key="1">
    <source>
        <dbReference type="HAMAP-Rule" id="MF_01077"/>
    </source>
</evidence>
<feature type="chain" id="PRO_0000181905" description="Ribosome maturation factor RimP">
    <location>
        <begin position="1"/>
        <end position="152"/>
    </location>
</feature>
<comment type="function">
    <text evidence="1">Required for maturation of 30S ribosomal subunits.</text>
</comment>
<comment type="subcellular location">
    <subcellularLocation>
        <location evidence="1">Cytoplasm</location>
    </subcellularLocation>
</comment>
<comment type="similarity">
    <text evidence="1">Belongs to the RimP family.</text>
</comment>
<protein>
    <recommendedName>
        <fullName evidence="1">Ribosome maturation factor RimP</fullName>
    </recommendedName>
</protein>
<sequence length="152" mass="17171">MSSKLEQLQALLAPVVEALGYECWGVEFISQGRHSVLRVYIDRPEGILIDDCEAVSRQVSGILDVEDPISGEYTLEVSSPGMDRPLFTLEQFAKHAGEQVKIRLRSPYEGRRNYQGILRGVEEQDVVVLVDDHEYLLPIDSIDKANIIPRFD</sequence>
<dbReference type="EMBL" id="AE004091">
    <property type="protein sequence ID" value="AAG08132.1"/>
    <property type="molecule type" value="Genomic_DNA"/>
</dbReference>
<dbReference type="PIR" id="A83053">
    <property type="entry name" value="A83053"/>
</dbReference>
<dbReference type="RefSeq" id="NP_253434.1">
    <property type="nucleotide sequence ID" value="NC_002516.2"/>
</dbReference>
<dbReference type="RefSeq" id="WP_003095193.1">
    <property type="nucleotide sequence ID" value="NZ_QZGE01000018.1"/>
</dbReference>
<dbReference type="SMR" id="Q9HV53"/>
<dbReference type="FunCoup" id="Q9HV53">
    <property type="interactions" value="393"/>
</dbReference>
<dbReference type="STRING" id="208964.PA4746"/>
<dbReference type="PaxDb" id="208964-PA4746"/>
<dbReference type="GeneID" id="77223281"/>
<dbReference type="GeneID" id="881700"/>
<dbReference type="KEGG" id="pae:PA4746"/>
<dbReference type="PATRIC" id="fig|208964.12.peg.4972"/>
<dbReference type="PseudoCAP" id="PA4746"/>
<dbReference type="HOGENOM" id="CLU_070525_1_1_6"/>
<dbReference type="InParanoid" id="Q9HV53"/>
<dbReference type="OrthoDB" id="9805006at2"/>
<dbReference type="PhylomeDB" id="Q9HV53"/>
<dbReference type="BioCyc" id="PAER208964:G1FZ6-4856-MONOMER"/>
<dbReference type="Proteomes" id="UP000002438">
    <property type="component" value="Chromosome"/>
</dbReference>
<dbReference type="GO" id="GO:0005829">
    <property type="term" value="C:cytosol"/>
    <property type="evidence" value="ECO:0000318"/>
    <property type="project" value="GO_Central"/>
</dbReference>
<dbReference type="GO" id="GO:0000028">
    <property type="term" value="P:ribosomal small subunit assembly"/>
    <property type="evidence" value="ECO:0000318"/>
    <property type="project" value="GO_Central"/>
</dbReference>
<dbReference type="GO" id="GO:0006412">
    <property type="term" value="P:translation"/>
    <property type="evidence" value="ECO:0000318"/>
    <property type="project" value="GO_Central"/>
</dbReference>
<dbReference type="CDD" id="cd01734">
    <property type="entry name" value="YlxS_C"/>
    <property type="match status" value="1"/>
</dbReference>
<dbReference type="FunFam" id="2.30.30.180:FF:000004">
    <property type="entry name" value="Ribosome maturation factor RimP"/>
    <property type="match status" value="1"/>
</dbReference>
<dbReference type="FunFam" id="3.30.300.70:FF:000001">
    <property type="entry name" value="Ribosome maturation factor RimP"/>
    <property type="match status" value="1"/>
</dbReference>
<dbReference type="Gene3D" id="2.30.30.180">
    <property type="entry name" value="Ribosome maturation factor RimP, C-terminal domain"/>
    <property type="match status" value="1"/>
</dbReference>
<dbReference type="Gene3D" id="3.30.300.70">
    <property type="entry name" value="RimP-like superfamily, N-terminal"/>
    <property type="match status" value="1"/>
</dbReference>
<dbReference type="HAMAP" id="MF_01077">
    <property type="entry name" value="RimP"/>
    <property type="match status" value="1"/>
</dbReference>
<dbReference type="InterPro" id="IPR003728">
    <property type="entry name" value="Ribosome_maturation_RimP"/>
</dbReference>
<dbReference type="InterPro" id="IPR028998">
    <property type="entry name" value="RimP_C"/>
</dbReference>
<dbReference type="InterPro" id="IPR036847">
    <property type="entry name" value="RimP_C_sf"/>
</dbReference>
<dbReference type="InterPro" id="IPR028989">
    <property type="entry name" value="RimP_N"/>
</dbReference>
<dbReference type="InterPro" id="IPR035956">
    <property type="entry name" value="RimP_N_sf"/>
</dbReference>
<dbReference type="NCBIfam" id="NF000927">
    <property type="entry name" value="PRK00092.1-1"/>
    <property type="match status" value="1"/>
</dbReference>
<dbReference type="PANTHER" id="PTHR33867">
    <property type="entry name" value="RIBOSOME MATURATION FACTOR RIMP"/>
    <property type="match status" value="1"/>
</dbReference>
<dbReference type="PANTHER" id="PTHR33867:SF1">
    <property type="entry name" value="RIBOSOME MATURATION FACTOR RIMP"/>
    <property type="match status" value="1"/>
</dbReference>
<dbReference type="Pfam" id="PF17384">
    <property type="entry name" value="DUF150_C"/>
    <property type="match status" value="1"/>
</dbReference>
<dbReference type="Pfam" id="PF02576">
    <property type="entry name" value="RimP_N"/>
    <property type="match status" value="1"/>
</dbReference>
<dbReference type="SUPFAM" id="SSF74942">
    <property type="entry name" value="YhbC-like, C-terminal domain"/>
    <property type="match status" value="1"/>
</dbReference>
<dbReference type="SUPFAM" id="SSF75420">
    <property type="entry name" value="YhbC-like, N-terminal domain"/>
    <property type="match status" value="1"/>
</dbReference>
<gene>
    <name evidence="1" type="primary">rimP</name>
    <name type="ordered locus">PA4746</name>
</gene>
<accession>Q9HV53</accession>
<organism>
    <name type="scientific">Pseudomonas aeruginosa (strain ATCC 15692 / DSM 22644 / CIP 104116 / JCM 14847 / LMG 12228 / 1C / PRS 101 / PAO1)</name>
    <dbReference type="NCBI Taxonomy" id="208964"/>
    <lineage>
        <taxon>Bacteria</taxon>
        <taxon>Pseudomonadati</taxon>
        <taxon>Pseudomonadota</taxon>
        <taxon>Gammaproteobacteria</taxon>
        <taxon>Pseudomonadales</taxon>
        <taxon>Pseudomonadaceae</taxon>
        <taxon>Pseudomonas</taxon>
    </lineage>
</organism>
<keyword id="KW-0963">Cytoplasm</keyword>
<keyword id="KW-1185">Reference proteome</keyword>
<keyword id="KW-0690">Ribosome biogenesis</keyword>
<reference key="1">
    <citation type="journal article" date="2000" name="Nature">
        <title>Complete genome sequence of Pseudomonas aeruginosa PAO1, an opportunistic pathogen.</title>
        <authorList>
            <person name="Stover C.K."/>
            <person name="Pham X.-Q.T."/>
            <person name="Erwin A.L."/>
            <person name="Mizoguchi S.D."/>
            <person name="Warrener P."/>
            <person name="Hickey M.J."/>
            <person name="Brinkman F.S.L."/>
            <person name="Hufnagle W.O."/>
            <person name="Kowalik D.J."/>
            <person name="Lagrou M."/>
            <person name="Garber R.L."/>
            <person name="Goltry L."/>
            <person name="Tolentino E."/>
            <person name="Westbrock-Wadman S."/>
            <person name="Yuan Y."/>
            <person name="Brody L.L."/>
            <person name="Coulter S.N."/>
            <person name="Folger K.R."/>
            <person name="Kas A."/>
            <person name="Larbig K."/>
            <person name="Lim R.M."/>
            <person name="Smith K.A."/>
            <person name="Spencer D.H."/>
            <person name="Wong G.K.-S."/>
            <person name="Wu Z."/>
            <person name="Paulsen I.T."/>
            <person name="Reizer J."/>
            <person name="Saier M.H. Jr."/>
            <person name="Hancock R.E.W."/>
            <person name="Lory S."/>
            <person name="Olson M.V."/>
        </authorList>
    </citation>
    <scope>NUCLEOTIDE SEQUENCE [LARGE SCALE GENOMIC DNA]</scope>
    <source>
        <strain>ATCC 15692 / DSM 22644 / CIP 104116 / JCM 14847 / LMG 12228 / 1C / PRS 101 / PAO1</strain>
    </source>
</reference>
<proteinExistence type="inferred from homology"/>
<name>RIMP_PSEAE</name>